<feature type="chain" id="PRO_1000007767" description="5'-nucleotidase SurE">
    <location>
        <begin position="1"/>
        <end position="249"/>
    </location>
</feature>
<feature type="binding site" evidence="1">
    <location>
        <position position="8"/>
    </location>
    <ligand>
        <name>a divalent metal cation</name>
        <dbReference type="ChEBI" id="CHEBI:60240"/>
    </ligand>
</feature>
<feature type="binding site" evidence="1">
    <location>
        <position position="9"/>
    </location>
    <ligand>
        <name>a divalent metal cation</name>
        <dbReference type="ChEBI" id="CHEBI:60240"/>
    </ligand>
</feature>
<feature type="binding site" evidence="1">
    <location>
        <position position="39"/>
    </location>
    <ligand>
        <name>a divalent metal cation</name>
        <dbReference type="ChEBI" id="CHEBI:60240"/>
    </ligand>
</feature>
<feature type="binding site" evidence="1">
    <location>
        <position position="91"/>
    </location>
    <ligand>
        <name>a divalent metal cation</name>
        <dbReference type="ChEBI" id="CHEBI:60240"/>
    </ligand>
</feature>
<proteinExistence type="inferred from homology"/>
<accession>A6V1G3</accession>
<keyword id="KW-0963">Cytoplasm</keyword>
<keyword id="KW-0378">Hydrolase</keyword>
<keyword id="KW-0479">Metal-binding</keyword>
<keyword id="KW-0547">Nucleotide-binding</keyword>
<organism>
    <name type="scientific">Pseudomonas paraeruginosa (strain DSM 24068 / PA7)</name>
    <name type="common">Pseudomonas aeruginosa (strain PA7)</name>
    <dbReference type="NCBI Taxonomy" id="381754"/>
    <lineage>
        <taxon>Bacteria</taxon>
        <taxon>Pseudomonadati</taxon>
        <taxon>Pseudomonadota</taxon>
        <taxon>Gammaproteobacteria</taxon>
        <taxon>Pseudomonadales</taxon>
        <taxon>Pseudomonadaceae</taxon>
        <taxon>Pseudomonas</taxon>
        <taxon>Pseudomonas paraeruginosa</taxon>
    </lineage>
</organism>
<evidence type="ECO:0000255" key="1">
    <source>
        <dbReference type="HAMAP-Rule" id="MF_00060"/>
    </source>
</evidence>
<protein>
    <recommendedName>
        <fullName evidence="1">5'-nucleotidase SurE</fullName>
        <ecNumber evidence="1">3.1.3.5</ecNumber>
    </recommendedName>
    <alternativeName>
        <fullName evidence="1">Nucleoside 5'-monophosphate phosphohydrolase</fullName>
    </alternativeName>
</protein>
<name>SURE_PSEP7</name>
<gene>
    <name evidence="1" type="primary">surE</name>
    <name type="ordered locus">PSPA7_1514</name>
</gene>
<dbReference type="EC" id="3.1.3.5" evidence="1"/>
<dbReference type="EMBL" id="CP000744">
    <property type="protein sequence ID" value="ABR85639.1"/>
    <property type="molecule type" value="Genomic_DNA"/>
</dbReference>
<dbReference type="RefSeq" id="WP_012074706.1">
    <property type="nucleotide sequence ID" value="NC_009656.1"/>
</dbReference>
<dbReference type="SMR" id="A6V1G3"/>
<dbReference type="KEGG" id="pap:PSPA7_1514"/>
<dbReference type="HOGENOM" id="CLU_045192_1_2_6"/>
<dbReference type="Proteomes" id="UP000001582">
    <property type="component" value="Chromosome"/>
</dbReference>
<dbReference type="GO" id="GO:0005737">
    <property type="term" value="C:cytoplasm"/>
    <property type="evidence" value="ECO:0007669"/>
    <property type="project" value="UniProtKB-SubCell"/>
</dbReference>
<dbReference type="GO" id="GO:0008254">
    <property type="term" value="F:3'-nucleotidase activity"/>
    <property type="evidence" value="ECO:0007669"/>
    <property type="project" value="TreeGrafter"/>
</dbReference>
<dbReference type="GO" id="GO:0008253">
    <property type="term" value="F:5'-nucleotidase activity"/>
    <property type="evidence" value="ECO:0007669"/>
    <property type="project" value="UniProtKB-UniRule"/>
</dbReference>
<dbReference type="GO" id="GO:0004309">
    <property type="term" value="F:exopolyphosphatase activity"/>
    <property type="evidence" value="ECO:0007669"/>
    <property type="project" value="TreeGrafter"/>
</dbReference>
<dbReference type="GO" id="GO:0046872">
    <property type="term" value="F:metal ion binding"/>
    <property type="evidence" value="ECO:0007669"/>
    <property type="project" value="UniProtKB-UniRule"/>
</dbReference>
<dbReference type="GO" id="GO:0000166">
    <property type="term" value="F:nucleotide binding"/>
    <property type="evidence" value="ECO:0007669"/>
    <property type="project" value="UniProtKB-KW"/>
</dbReference>
<dbReference type="FunFam" id="3.40.1210.10:FF:000001">
    <property type="entry name" value="5'/3'-nucleotidase SurE"/>
    <property type="match status" value="1"/>
</dbReference>
<dbReference type="Gene3D" id="3.40.1210.10">
    <property type="entry name" value="Survival protein SurE-like phosphatase/nucleotidase"/>
    <property type="match status" value="1"/>
</dbReference>
<dbReference type="HAMAP" id="MF_00060">
    <property type="entry name" value="SurE"/>
    <property type="match status" value="1"/>
</dbReference>
<dbReference type="InterPro" id="IPR030048">
    <property type="entry name" value="SurE"/>
</dbReference>
<dbReference type="InterPro" id="IPR002828">
    <property type="entry name" value="SurE-like_Pase/nucleotidase"/>
</dbReference>
<dbReference type="InterPro" id="IPR036523">
    <property type="entry name" value="SurE-like_sf"/>
</dbReference>
<dbReference type="NCBIfam" id="NF001489">
    <property type="entry name" value="PRK00346.1-3"/>
    <property type="match status" value="1"/>
</dbReference>
<dbReference type="NCBIfam" id="NF001490">
    <property type="entry name" value="PRK00346.1-4"/>
    <property type="match status" value="1"/>
</dbReference>
<dbReference type="NCBIfam" id="TIGR00087">
    <property type="entry name" value="surE"/>
    <property type="match status" value="1"/>
</dbReference>
<dbReference type="PANTHER" id="PTHR30457">
    <property type="entry name" value="5'-NUCLEOTIDASE SURE"/>
    <property type="match status" value="1"/>
</dbReference>
<dbReference type="PANTHER" id="PTHR30457:SF12">
    <property type="entry name" value="5'_3'-NUCLEOTIDASE SURE"/>
    <property type="match status" value="1"/>
</dbReference>
<dbReference type="Pfam" id="PF01975">
    <property type="entry name" value="SurE"/>
    <property type="match status" value="1"/>
</dbReference>
<dbReference type="SUPFAM" id="SSF64167">
    <property type="entry name" value="SurE-like"/>
    <property type="match status" value="1"/>
</dbReference>
<comment type="function">
    <text evidence="1">Nucleotidase that shows phosphatase activity on nucleoside 5'-monophosphates.</text>
</comment>
<comment type="catalytic activity">
    <reaction evidence="1">
        <text>a ribonucleoside 5'-phosphate + H2O = a ribonucleoside + phosphate</text>
        <dbReference type="Rhea" id="RHEA:12484"/>
        <dbReference type="ChEBI" id="CHEBI:15377"/>
        <dbReference type="ChEBI" id="CHEBI:18254"/>
        <dbReference type="ChEBI" id="CHEBI:43474"/>
        <dbReference type="ChEBI" id="CHEBI:58043"/>
        <dbReference type="EC" id="3.1.3.5"/>
    </reaction>
</comment>
<comment type="cofactor">
    <cofactor evidence="1">
        <name>a divalent metal cation</name>
        <dbReference type="ChEBI" id="CHEBI:60240"/>
    </cofactor>
    <text evidence="1">Binds 1 divalent metal cation per subunit.</text>
</comment>
<comment type="subcellular location">
    <subcellularLocation>
        <location evidence="1">Cytoplasm</location>
    </subcellularLocation>
</comment>
<comment type="similarity">
    <text evidence="1">Belongs to the SurE nucleotidase family.</text>
</comment>
<sequence length="249" mass="26395">MRILIANDDGVTAPGIAALYDALADHADCVVIAPDQDKSGASSSLTLDRPLHPQRLDNGFISLNGTPTDCVHLGLNGLLEELPDMVVSGINLGANLGDDVLYSGTVAAAIEGRFLKGPAFAFSLVSRLTDNLPTAMHFARLLVAAHERLAVPPRTVLNVNVPNLPLERVRGIQLTRLGHRARAAAPVKVVNPRGKEGYWISAAGDAEDGGPGTDFHAVMQGYVSITPLQLDRTFHEAFGGLDEWLGGLK</sequence>
<reference key="1">
    <citation type="submission" date="2007-06" db="EMBL/GenBank/DDBJ databases">
        <authorList>
            <person name="Dodson R.J."/>
            <person name="Harkins D."/>
            <person name="Paulsen I.T."/>
        </authorList>
    </citation>
    <scope>NUCLEOTIDE SEQUENCE [LARGE SCALE GENOMIC DNA]</scope>
    <source>
        <strain>DSM 24068 / PA7</strain>
    </source>
</reference>